<name>EFTS_HAEIE</name>
<proteinExistence type="inferred from homology"/>
<sequence length="283" mass="30188">MAEITASLVKELRDRTGAGMMECKKALVEANGDIELAIDNMRKSGQAKAAKKAGRVAAEGVILARVENGFGVLVEMNCETDFVAKDAGFLGLANEVTDFAAANKGTTIEALQAQFEEKRAALVAKIGENMNIRRVAYLDGQVIAQYLHGAKIGVLVAGEGSADELKKVAMHVAASKPEFVNPEDVSAEVVEHERQIQIDIAINSGKPKEIAEKMVEGRMKKFTGEVSLTGQAFVMDPSVSVGDFLKSVNTSVSNFIRLEVGEGIEKKEEDFAAEVAKITGGNA</sequence>
<feature type="chain" id="PRO_1000006102" description="Elongation factor Ts">
    <location>
        <begin position="1"/>
        <end position="283"/>
    </location>
</feature>
<feature type="region of interest" description="Involved in Mg(2+) ion dislocation from EF-Tu" evidence="1">
    <location>
        <begin position="80"/>
        <end position="83"/>
    </location>
</feature>
<dbReference type="EMBL" id="CP000671">
    <property type="protein sequence ID" value="ABQ98812.1"/>
    <property type="molecule type" value="Genomic_DNA"/>
</dbReference>
<dbReference type="SMR" id="A5UDG1"/>
<dbReference type="KEGG" id="hip:CGSHiEE_07445"/>
<dbReference type="HOGENOM" id="CLU_047155_0_2_6"/>
<dbReference type="GO" id="GO:0005737">
    <property type="term" value="C:cytoplasm"/>
    <property type="evidence" value="ECO:0007669"/>
    <property type="project" value="UniProtKB-SubCell"/>
</dbReference>
<dbReference type="GO" id="GO:0003746">
    <property type="term" value="F:translation elongation factor activity"/>
    <property type="evidence" value="ECO:0007669"/>
    <property type="project" value="UniProtKB-UniRule"/>
</dbReference>
<dbReference type="CDD" id="cd14275">
    <property type="entry name" value="UBA_EF-Ts"/>
    <property type="match status" value="1"/>
</dbReference>
<dbReference type="FunFam" id="1.10.286.20:FF:000001">
    <property type="entry name" value="Elongation factor Ts"/>
    <property type="match status" value="1"/>
</dbReference>
<dbReference type="FunFam" id="1.10.8.10:FF:000001">
    <property type="entry name" value="Elongation factor Ts"/>
    <property type="match status" value="1"/>
</dbReference>
<dbReference type="FunFam" id="3.30.479.20:FF:000001">
    <property type="entry name" value="Elongation factor Ts"/>
    <property type="match status" value="1"/>
</dbReference>
<dbReference type="Gene3D" id="1.10.286.20">
    <property type="match status" value="1"/>
</dbReference>
<dbReference type="Gene3D" id="1.10.8.10">
    <property type="entry name" value="DNA helicase RuvA subunit, C-terminal domain"/>
    <property type="match status" value="1"/>
</dbReference>
<dbReference type="Gene3D" id="3.30.479.20">
    <property type="entry name" value="Elongation factor Ts, dimerisation domain"/>
    <property type="match status" value="2"/>
</dbReference>
<dbReference type="HAMAP" id="MF_00050">
    <property type="entry name" value="EF_Ts"/>
    <property type="match status" value="1"/>
</dbReference>
<dbReference type="InterPro" id="IPR036402">
    <property type="entry name" value="EF-Ts_dimer_sf"/>
</dbReference>
<dbReference type="InterPro" id="IPR001816">
    <property type="entry name" value="Transl_elong_EFTs/EF1B"/>
</dbReference>
<dbReference type="InterPro" id="IPR014039">
    <property type="entry name" value="Transl_elong_EFTs/EF1B_dimer"/>
</dbReference>
<dbReference type="InterPro" id="IPR018101">
    <property type="entry name" value="Transl_elong_Ts_CS"/>
</dbReference>
<dbReference type="InterPro" id="IPR009060">
    <property type="entry name" value="UBA-like_sf"/>
</dbReference>
<dbReference type="NCBIfam" id="TIGR00116">
    <property type="entry name" value="tsf"/>
    <property type="match status" value="1"/>
</dbReference>
<dbReference type="PANTHER" id="PTHR11741">
    <property type="entry name" value="ELONGATION FACTOR TS"/>
    <property type="match status" value="1"/>
</dbReference>
<dbReference type="PANTHER" id="PTHR11741:SF0">
    <property type="entry name" value="ELONGATION FACTOR TS, MITOCHONDRIAL"/>
    <property type="match status" value="1"/>
</dbReference>
<dbReference type="Pfam" id="PF00889">
    <property type="entry name" value="EF_TS"/>
    <property type="match status" value="1"/>
</dbReference>
<dbReference type="SUPFAM" id="SSF54713">
    <property type="entry name" value="Elongation factor Ts (EF-Ts), dimerisation domain"/>
    <property type="match status" value="2"/>
</dbReference>
<dbReference type="SUPFAM" id="SSF46934">
    <property type="entry name" value="UBA-like"/>
    <property type="match status" value="1"/>
</dbReference>
<dbReference type="PROSITE" id="PS01126">
    <property type="entry name" value="EF_TS_1"/>
    <property type="match status" value="1"/>
</dbReference>
<dbReference type="PROSITE" id="PS01127">
    <property type="entry name" value="EF_TS_2"/>
    <property type="match status" value="1"/>
</dbReference>
<keyword id="KW-0963">Cytoplasm</keyword>
<keyword id="KW-0251">Elongation factor</keyword>
<keyword id="KW-0648">Protein biosynthesis</keyword>
<evidence type="ECO:0000255" key="1">
    <source>
        <dbReference type="HAMAP-Rule" id="MF_00050"/>
    </source>
</evidence>
<protein>
    <recommendedName>
        <fullName evidence="1">Elongation factor Ts</fullName>
        <shortName evidence="1">EF-Ts</shortName>
    </recommendedName>
</protein>
<comment type="function">
    <text evidence="1">Associates with the EF-Tu.GDP complex and induces the exchange of GDP to GTP. It remains bound to the aminoacyl-tRNA.EF-Tu.GTP complex up to the GTP hydrolysis stage on the ribosome.</text>
</comment>
<comment type="subcellular location">
    <subcellularLocation>
        <location evidence="1">Cytoplasm</location>
    </subcellularLocation>
</comment>
<comment type="similarity">
    <text evidence="1">Belongs to the EF-Ts family.</text>
</comment>
<reference key="1">
    <citation type="journal article" date="2007" name="Genome Biol.">
        <title>Characterization and modeling of the Haemophilus influenzae core and supragenomes based on the complete genomic sequences of Rd and 12 clinical nontypeable strains.</title>
        <authorList>
            <person name="Hogg J.S."/>
            <person name="Hu F.Z."/>
            <person name="Janto B."/>
            <person name="Boissy R."/>
            <person name="Hayes J."/>
            <person name="Keefe R."/>
            <person name="Post J.C."/>
            <person name="Ehrlich G.D."/>
        </authorList>
    </citation>
    <scope>NUCLEOTIDE SEQUENCE [LARGE SCALE GENOMIC DNA]</scope>
    <source>
        <strain>PittEE</strain>
    </source>
</reference>
<organism>
    <name type="scientific">Haemophilus influenzae (strain PittEE)</name>
    <dbReference type="NCBI Taxonomy" id="374930"/>
    <lineage>
        <taxon>Bacteria</taxon>
        <taxon>Pseudomonadati</taxon>
        <taxon>Pseudomonadota</taxon>
        <taxon>Gammaproteobacteria</taxon>
        <taxon>Pasteurellales</taxon>
        <taxon>Pasteurellaceae</taxon>
        <taxon>Haemophilus</taxon>
    </lineage>
</organism>
<gene>
    <name evidence="1" type="primary">tsf</name>
    <name type="ordered locus">CGSHiEE_07445</name>
</gene>
<accession>A5UDG1</accession>